<reference key="1">
    <citation type="journal article" date="2006" name="Science">
        <title>Genome of rice cluster I archaea -- the key methane producers in the rice rhizosphere.</title>
        <authorList>
            <person name="Erkel C."/>
            <person name="Kube M."/>
            <person name="Reinhardt R."/>
            <person name="Liesack W."/>
        </authorList>
    </citation>
    <scope>NUCLEOTIDE SEQUENCE [LARGE SCALE GENOMIC DNA]</scope>
    <source>
        <strain>DSM 22066 / NBRC 105507 / MRE50</strain>
    </source>
</reference>
<dbReference type="EC" id="2.7.1.50" evidence="1"/>
<dbReference type="EMBL" id="AM114193">
    <property type="protein sequence ID" value="CAJ37724.1"/>
    <property type="molecule type" value="Genomic_DNA"/>
</dbReference>
<dbReference type="RefSeq" id="WP_012034862.1">
    <property type="nucleotide sequence ID" value="NC_009464.1"/>
</dbReference>
<dbReference type="SMR" id="Q0W1L9"/>
<dbReference type="STRING" id="351160.RCIX2677"/>
<dbReference type="GeneID" id="5145312"/>
<dbReference type="KEGG" id="rci:RCIX2677"/>
<dbReference type="PATRIC" id="fig|351160.9.peg.559"/>
<dbReference type="eggNOG" id="arCOG00019">
    <property type="taxonomic scope" value="Archaea"/>
</dbReference>
<dbReference type="OrthoDB" id="214286at2157"/>
<dbReference type="UniPathway" id="UPA00060">
    <property type="reaction ID" value="UER00139"/>
</dbReference>
<dbReference type="Proteomes" id="UP000000663">
    <property type="component" value="Chromosome"/>
</dbReference>
<dbReference type="GO" id="GO:0005524">
    <property type="term" value="F:ATP binding"/>
    <property type="evidence" value="ECO:0007669"/>
    <property type="project" value="UniProtKB-UniRule"/>
</dbReference>
<dbReference type="GO" id="GO:0004417">
    <property type="term" value="F:hydroxyethylthiazole kinase activity"/>
    <property type="evidence" value="ECO:0007669"/>
    <property type="project" value="UniProtKB-UniRule"/>
</dbReference>
<dbReference type="GO" id="GO:0000287">
    <property type="term" value="F:magnesium ion binding"/>
    <property type="evidence" value="ECO:0007669"/>
    <property type="project" value="UniProtKB-UniRule"/>
</dbReference>
<dbReference type="GO" id="GO:0009228">
    <property type="term" value="P:thiamine biosynthetic process"/>
    <property type="evidence" value="ECO:0007669"/>
    <property type="project" value="UniProtKB-KW"/>
</dbReference>
<dbReference type="GO" id="GO:0009229">
    <property type="term" value="P:thiamine diphosphate biosynthetic process"/>
    <property type="evidence" value="ECO:0007669"/>
    <property type="project" value="UniProtKB-UniRule"/>
</dbReference>
<dbReference type="CDD" id="cd01170">
    <property type="entry name" value="THZ_kinase"/>
    <property type="match status" value="1"/>
</dbReference>
<dbReference type="Gene3D" id="3.40.1190.20">
    <property type="match status" value="1"/>
</dbReference>
<dbReference type="HAMAP" id="MF_00228">
    <property type="entry name" value="Thz_kinase"/>
    <property type="match status" value="1"/>
</dbReference>
<dbReference type="InterPro" id="IPR000417">
    <property type="entry name" value="Hyethyz_kinase"/>
</dbReference>
<dbReference type="InterPro" id="IPR029056">
    <property type="entry name" value="Ribokinase-like"/>
</dbReference>
<dbReference type="NCBIfam" id="NF006830">
    <property type="entry name" value="PRK09355.1"/>
    <property type="match status" value="1"/>
</dbReference>
<dbReference type="NCBIfam" id="TIGR00694">
    <property type="entry name" value="thiM"/>
    <property type="match status" value="1"/>
</dbReference>
<dbReference type="Pfam" id="PF02110">
    <property type="entry name" value="HK"/>
    <property type="match status" value="1"/>
</dbReference>
<dbReference type="PIRSF" id="PIRSF000513">
    <property type="entry name" value="Thz_kinase"/>
    <property type="match status" value="1"/>
</dbReference>
<dbReference type="PRINTS" id="PR01099">
    <property type="entry name" value="HYETHTZKNASE"/>
</dbReference>
<dbReference type="SUPFAM" id="SSF53613">
    <property type="entry name" value="Ribokinase-like"/>
    <property type="match status" value="1"/>
</dbReference>
<organism>
    <name type="scientific">Methanocella arvoryzae (strain DSM 22066 / NBRC 105507 / MRE50)</name>
    <dbReference type="NCBI Taxonomy" id="351160"/>
    <lineage>
        <taxon>Archaea</taxon>
        <taxon>Methanobacteriati</taxon>
        <taxon>Methanobacteriota</taxon>
        <taxon>Stenosarchaea group</taxon>
        <taxon>Methanomicrobia</taxon>
        <taxon>Methanocellales</taxon>
        <taxon>Methanocellaceae</taxon>
        <taxon>Methanocella</taxon>
    </lineage>
</organism>
<comment type="function">
    <text evidence="1">Catalyzes the phosphorylation of the hydroxyl group of 4-methyl-5-beta-hydroxyethylthiazole (THZ).</text>
</comment>
<comment type="catalytic activity">
    <reaction evidence="1">
        <text>5-(2-hydroxyethyl)-4-methylthiazole + ATP = 4-methyl-5-(2-phosphooxyethyl)-thiazole + ADP + H(+)</text>
        <dbReference type="Rhea" id="RHEA:24212"/>
        <dbReference type="ChEBI" id="CHEBI:15378"/>
        <dbReference type="ChEBI" id="CHEBI:17957"/>
        <dbReference type="ChEBI" id="CHEBI:30616"/>
        <dbReference type="ChEBI" id="CHEBI:58296"/>
        <dbReference type="ChEBI" id="CHEBI:456216"/>
        <dbReference type="EC" id="2.7.1.50"/>
    </reaction>
</comment>
<comment type="cofactor">
    <cofactor evidence="1">
        <name>Mg(2+)</name>
        <dbReference type="ChEBI" id="CHEBI:18420"/>
    </cofactor>
</comment>
<comment type="pathway">
    <text evidence="1">Cofactor biosynthesis; thiamine diphosphate biosynthesis; 4-methyl-5-(2-phosphoethyl)-thiazole from 5-(2-hydroxyethyl)-4-methylthiazole: step 1/1.</text>
</comment>
<comment type="similarity">
    <text evidence="1">Belongs to the Thz kinase family.</text>
</comment>
<evidence type="ECO:0000255" key="1">
    <source>
        <dbReference type="HAMAP-Rule" id="MF_00228"/>
    </source>
</evidence>
<keyword id="KW-0067">ATP-binding</keyword>
<keyword id="KW-0418">Kinase</keyword>
<keyword id="KW-0460">Magnesium</keyword>
<keyword id="KW-0479">Metal-binding</keyword>
<keyword id="KW-0547">Nucleotide-binding</keyword>
<keyword id="KW-1185">Reference proteome</keyword>
<keyword id="KW-0784">Thiamine biosynthesis</keyword>
<keyword id="KW-0808">Transferase</keyword>
<name>THIM_METAR</name>
<proteinExistence type="inferred from homology"/>
<sequence length="266" mass="27592">MDARSLSGILTEVREKRPLVHHITNYVTVNDCANVTLCIGAAPVMAHAHDEVAEMVAMAGALVLNIGTLDHRQVESMLAAGHRANELNIPIILDPVGAGATRLRTETAKTLLHKLHVSVLKGNAGEIATLAGAEGKVRGVDSAGVSGDPAEFARGLAEKLGLVVAVSGATDIVTDGKRLIYVDNGHEMMGKLSGTGCMASSISGAFAAASKDYVTSTAAALASFGVAGEKAAKRCEGPASFKIALLDEIYRLTADEVAHNIKVRFA</sequence>
<accession>Q0W1L9</accession>
<feature type="chain" id="PRO_0000383923" description="Hydroxyethylthiazole kinase">
    <location>
        <begin position="1"/>
        <end position="266"/>
    </location>
</feature>
<feature type="binding site" evidence="1">
    <location>
        <position position="45"/>
    </location>
    <ligand>
        <name>substrate</name>
    </ligand>
</feature>
<feature type="binding site" evidence="1">
    <location>
        <position position="121"/>
    </location>
    <ligand>
        <name>ATP</name>
        <dbReference type="ChEBI" id="CHEBI:30616"/>
    </ligand>
</feature>
<feature type="binding site" evidence="1">
    <location>
        <position position="167"/>
    </location>
    <ligand>
        <name>ATP</name>
        <dbReference type="ChEBI" id="CHEBI:30616"/>
    </ligand>
</feature>
<feature type="binding site" evidence="1">
    <location>
        <position position="194"/>
    </location>
    <ligand>
        <name>substrate</name>
    </ligand>
</feature>
<gene>
    <name evidence="1" type="primary">thiM</name>
    <name type="ordered locus">UNCMA_05330</name>
    <name type="ORF">RCIX2677</name>
</gene>
<protein>
    <recommendedName>
        <fullName evidence="1">Hydroxyethylthiazole kinase</fullName>
        <ecNumber evidence="1">2.7.1.50</ecNumber>
    </recommendedName>
    <alternativeName>
        <fullName evidence="1">4-methyl-5-beta-hydroxyethylthiazole kinase</fullName>
        <shortName evidence="1">TH kinase</shortName>
        <shortName evidence="1">Thz kinase</shortName>
    </alternativeName>
</protein>